<protein>
    <recommendedName>
        <fullName>Uncharacterized protein C48B4.8</fullName>
    </recommendedName>
</protein>
<reference key="1">
    <citation type="journal article" date="1994" name="Nature">
        <title>2.2 Mb of contiguous nucleotide sequence from chromosome III of C. elegans.</title>
        <authorList>
            <person name="Wilson R."/>
            <person name="Ainscough R."/>
            <person name="Anderson K."/>
            <person name="Baynes C."/>
            <person name="Berks M."/>
            <person name="Bonfield J."/>
            <person name="Burton J."/>
            <person name="Connell M."/>
            <person name="Copsey T."/>
            <person name="Cooper J."/>
            <person name="Coulson A."/>
            <person name="Craxton M."/>
            <person name="Dear S."/>
            <person name="Du Z."/>
            <person name="Durbin R."/>
            <person name="Favello A."/>
            <person name="Fraser A."/>
            <person name="Fulton L."/>
            <person name="Gardner A."/>
            <person name="Green P."/>
            <person name="Hawkins T."/>
            <person name="Hillier L."/>
            <person name="Jier M."/>
            <person name="Johnston L."/>
            <person name="Jones M."/>
            <person name="Kershaw J."/>
            <person name="Kirsten J."/>
            <person name="Laisster N."/>
            <person name="Latreille P."/>
            <person name="Lightning J."/>
            <person name="Lloyd C."/>
            <person name="Mortimore B."/>
            <person name="O'Callaghan M."/>
            <person name="Parsons J."/>
            <person name="Percy C."/>
            <person name="Rifken L."/>
            <person name="Roopra A."/>
            <person name="Saunders D."/>
            <person name="Shownkeen R."/>
            <person name="Sims M."/>
            <person name="Smaldon N."/>
            <person name="Smith A."/>
            <person name="Smith M."/>
            <person name="Sonnhammer E."/>
            <person name="Staden R."/>
            <person name="Sulston J."/>
            <person name="Thierry-Mieg J."/>
            <person name="Thomas K."/>
            <person name="Vaudin M."/>
            <person name="Vaughan K."/>
            <person name="Waterston R."/>
            <person name="Watson A."/>
            <person name="Weinstock L."/>
            <person name="Wilkinson-Sproat J."/>
            <person name="Wohldman P."/>
        </authorList>
    </citation>
    <scope>NUCLEOTIDE SEQUENCE [LARGE SCALE GENOMIC DNA]</scope>
    <source>
        <strain>Bristol N2</strain>
    </source>
</reference>
<reference key="2">
    <citation type="journal article" date="1998" name="Science">
        <title>Genome sequence of the nematode C. elegans: a platform for investigating biology.</title>
        <authorList>
            <consortium name="The C. elegans sequencing consortium"/>
        </authorList>
    </citation>
    <scope>NUCLEOTIDE SEQUENCE [LARGE SCALE GENOMIC DNA]</scope>
    <source>
        <strain>Bristol N2</strain>
    </source>
</reference>
<proteinExistence type="predicted"/>
<name>YLH8_CAEEL</name>
<organism>
    <name type="scientific">Caenorhabditis elegans</name>
    <dbReference type="NCBI Taxonomy" id="6239"/>
    <lineage>
        <taxon>Eukaryota</taxon>
        <taxon>Metazoa</taxon>
        <taxon>Ecdysozoa</taxon>
        <taxon>Nematoda</taxon>
        <taxon>Chromadorea</taxon>
        <taxon>Rhabditida</taxon>
        <taxon>Rhabditina</taxon>
        <taxon>Rhabditomorpha</taxon>
        <taxon>Rhabditoidea</taxon>
        <taxon>Rhabditidae</taxon>
        <taxon>Peloderinae</taxon>
        <taxon>Caenorhabditis</taxon>
    </lineage>
</organism>
<dbReference type="EMBL" id="Z29117">
    <property type="protein sequence ID" value="CAA82380.1"/>
    <property type="molecule type" value="Genomic_DNA"/>
</dbReference>
<dbReference type="PIR" id="S40728">
    <property type="entry name" value="S40728"/>
</dbReference>
<dbReference type="RefSeq" id="NP_001255010.1">
    <property type="nucleotide sequence ID" value="NM_001268081.2"/>
</dbReference>
<dbReference type="FunCoup" id="P34362">
    <property type="interactions" value="1522"/>
</dbReference>
<dbReference type="STRING" id="6239.C48B4.8a.1"/>
<dbReference type="PaxDb" id="6239-C48B4.8a"/>
<dbReference type="EnsemblMetazoa" id="C48B4.8a.1">
    <property type="protein sequence ID" value="C48B4.8a.1"/>
    <property type="gene ID" value="WBGene00008171"/>
</dbReference>
<dbReference type="GeneID" id="176351"/>
<dbReference type="KEGG" id="cel:CELE_C48B4.8"/>
<dbReference type="UCSC" id="C48B4.8">
    <property type="organism name" value="c. elegans"/>
</dbReference>
<dbReference type="AGR" id="WB:WBGene00008171"/>
<dbReference type="CTD" id="176351"/>
<dbReference type="WormBase" id="C48B4.8a">
    <property type="protein sequence ID" value="CE00484"/>
    <property type="gene ID" value="WBGene00008171"/>
</dbReference>
<dbReference type="eggNOG" id="ENOG502TI7X">
    <property type="taxonomic scope" value="Eukaryota"/>
</dbReference>
<dbReference type="HOGENOM" id="CLU_1455729_0_0_1"/>
<dbReference type="InParanoid" id="P34362"/>
<dbReference type="OMA" id="LITHIMM"/>
<dbReference type="OrthoDB" id="5868950at2759"/>
<dbReference type="PRO" id="PR:P34362"/>
<dbReference type="Proteomes" id="UP000001940">
    <property type="component" value="Chromosome III"/>
</dbReference>
<dbReference type="Bgee" id="WBGene00008171">
    <property type="expression patterns" value="Expressed in germ line (C elegans) and 4 other cell types or tissues"/>
</dbReference>
<dbReference type="ExpressionAtlas" id="P34362">
    <property type="expression patterns" value="baseline and differential"/>
</dbReference>
<gene>
    <name type="ORF">C48B4.8</name>
</gene>
<accession>P34362</accession>
<keyword id="KW-1185">Reference proteome</keyword>
<sequence length="196" mass="22713">MRTVKFKGMGIRHLDDGRFVIVPPTFLWWPAKHVILSIILANAIITTFFLLQASNILASILLCSILLSIVFAMGYIRESFALIYIHFIYCLLYIVFSFLFIPTFYYDQKICTNAAICKTVQEWLEELVTTVASRWIYAFTGTTLITHIMMTPVSLRMMKYSASCEALEKMMTDEEYVKKMKRLAIIHPERYHPASV</sequence>
<feature type="chain" id="PRO_0000065249" description="Uncharacterized protein C48B4.8">
    <location>
        <begin position="1"/>
        <end position="196"/>
    </location>
</feature>